<evidence type="ECO:0000250" key="1"/>
<evidence type="ECO:0000250" key="2">
    <source>
        <dbReference type="UniProtKB" id="P84051"/>
    </source>
</evidence>
<evidence type="ECO:0000256" key="3">
    <source>
        <dbReference type="SAM" id="MobiDB-lite"/>
    </source>
</evidence>
<evidence type="ECO:0000305" key="4"/>
<name>H2A_DROYA</name>
<accession>P84055</accession>
<accession>B4IW80</accession>
<accession>D5MP57</accession>
<accession>P02267</accession>
<accession>Q6XHF1</accession>
<organism>
    <name type="scientific">Drosophila yakuba</name>
    <name type="common">Fruit fly</name>
    <dbReference type="NCBI Taxonomy" id="7245"/>
    <lineage>
        <taxon>Eukaryota</taxon>
        <taxon>Metazoa</taxon>
        <taxon>Ecdysozoa</taxon>
        <taxon>Arthropoda</taxon>
        <taxon>Hexapoda</taxon>
        <taxon>Insecta</taxon>
        <taxon>Pterygota</taxon>
        <taxon>Neoptera</taxon>
        <taxon>Endopterygota</taxon>
        <taxon>Diptera</taxon>
        <taxon>Brachycera</taxon>
        <taxon>Muscomorpha</taxon>
        <taxon>Ephydroidea</taxon>
        <taxon>Drosophilidae</taxon>
        <taxon>Drosophila</taxon>
        <taxon>Sophophora</taxon>
    </lineage>
</organism>
<keyword id="KW-0007">Acetylation</keyword>
<keyword id="KW-0158">Chromosome</keyword>
<keyword id="KW-0238">DNA-binding</keyword>
<keyword id="KW-1017">Isopeptide bond</keyword>
<keyword id="KW-0488">Methylation</keyword>
<keyword id="KW-0544">Nucleosome core</keyword>
<keyword id="KW-0539">Nucleus</keyword>
<keyword id="KW-0597">Phosphoprotein</keyword>
<keyword id="KW-0832">Ubl conjugation</keyword>
<protein>
    <recommendedName>
        <fullName>Histone H2A</fullName>
    </recommendedName>
</protein>
<feature type="initiator methionine" description="Removed" evidence="1">
    <location>
        <position position="1"/>
    </location>
</feature>
<feature type="chain" id="PRO_0000055224" description="Histone H2A">
    <location>
        <begin position="2"/>
        <end position="124"/>
    </location>
</feature>
<feature type="region of interest" description="Disordered" evidence="3">
    <location>
        <begin position="1"/>
        <end position="21"/>
    </location>
</feature>
<feature type="compositionally biased region" description="Basic residues" evidence="3">
    <location>
        <begin position="1"/>
        <end position="18"/>
    </location>
</feature>
<feature type="modified residue" description="N-acetylserine" evidence="1">
    <location>
        <position position="2"/>
    </location>
</feature>
<feature type="modified residue" description="Phosphoserine" evidence="1">
    <location>
        <position position="2"/>
    </location>
</feature>
<feature type="modified residue" description="N6-succinyllysine" evidence="2">
    <location>
        <position position="36"/>
    </location>
</feature>
<feature type="modified residue" description="N5-methylglutamine" evidence="1">
    <location>
        <position position="104"/>
    </location>
</feature>
<feature type="modified residue" description="Phosphothreonine" evidence="1">
    <location>
        <position position="120"/>
    </location>
</feature>
<feature type="cross-link" description="Glycyl lysine isopeptide (Lys-Gly) (interchain with G-Cter in ubiquitin)" evidence="1">
    <location>
        <position position="119"/>
    </location>
</feature>
<gene>
    <name type="primary">His2A</name>
    <name type="synonym">H2a</name>
</gene>
<gene>
    <name type="ORF">GE14578</name>
</gene>
<gene>
    <name type="ORF">GE15127</name>
</gene>
<comment type="function">
    <text>Core component of nucleosome. Nucleosomes wrap and compact DNA into chromatin, limiting DNA accessibility to the cellular machineries which require DNA as a template. Histones thereby play a central role in transcription regulation, DNA repair, DNA replication and chromosomal stability. DNA accessibility is regulated via a complex set of post-translational modifications of histones, also called histone code, and nucleosome remodeling.</text>
</comment>
<comment type="subunit">
    <text>The nucleosome is a histone octamer containing two molecules each of H2A, H2B, H3 and H4 assembled in one H3-H4 heterotetramer and two H2A-H2B heterodimers. The octamer wraps approximately 147 bp of DNA.</text>
</comment>
<comment type="subcellular location">
    <subcellularLocation>
        <location>Nucleus</location>
    </subcellularLocation>
    <subcellularLocation>
        <location>Chromosome</location>
    </subcellularLocation>
</comment>
<comment type="PTM">
    <text evidence="1">The chromatin-associated form, but not the free cytoplasmic form, is phosphorylated on Thr-120 by NHK-1 during mitosis, and dephosphorylated during S-phase. Also phosphorylated on Thr-120 by NHK-1 during prophase I of meiosis; which is required for acetylation of H3 'Lys-14' and H4 'Lys-5', diassembly of the synaptonemal complex, and karyosome formation (By similarity).</text>
</comment>
<comment type="PTM">
    <text evidence="1">Monoubiquitination of Lys-119 by sce/dRING gives a specific tag for epigenetic transcriptional repression.</text>
</comment>
<comment type="PTM">
    <text evidence="1">Phosphorylation on Ser-2 is enhanced during mitosis. Phosphorylation on Ser-2 directly represses transcription (By similarity).</text>
</comment>
<comment type="similarity">
    <text evidence="4">Belongs to the histone H2A family.</text>
</comment>
<dbReference type="EMBL" id="AB073635">
    <property type="protein sequence ID" value="BAC54556.1"/>
    <property type="molecule type" value="Genomic_DNA"/>
</dbReference>
<dbReference type="EMBL" id="AB073636">
    <property type="protein sequence ID" value="BAJ06136.1"/>
    <property type="molecule type" value="Genomic_DNA"/>
</dbReference>
<dbReference type="EMBL" id="AB105179">
    <property type="protein sequence ID" value="BAD02421.1"/>
    <property type="molecule type" value="Genomic_DNA"/>
</dbReference>
<dbReference type="EMBL" id="CH897169">
    <property type="protein sequence ID" value="EDX00543.1"/>
    <property type="molecule type" value="Genomic_DNA"/>
</dbReference>
<dbReference type="EMBL" id="CH899414">
    <property type="protein sequence ID" value="EDX00670.1"/>
    <property type="molecule type" value="Genomic_DNA"/>
</dbReference>
<dbReference type="EMBL" id="AY232232">
    <property type="protein sequence ID" value="AAR10255.1"/>
    <property type="molecule type" value="mRNA"/>
</dbReference>
<dbReference type="RefSeq" id="XP_002087242.1">
    <property type="nucleotide sequence ID" value="XM_002087206.2"/>
</dbReference>
<dbReference type="RefSeq" id="XP_002087253.1">
    <property type="nucleotide sequence ID" value="XM_002087217.2"/>
</dbReference>
<dbReference type="RefSeq" id="XP_002087349.2">
    <property type="nucleotide sequence ID" value="XM_002087313.2"/>
</dbReference>
<dbReference type="SMR" id="P84055"/>
<dbReference type="EnsemblMetazoa" id="FBtr0261096">
    <property type="protein sequence ID" value="FBpp0259588"/>
    <property type="gene ID" value="FBgn0232174"/>
</dbReference>
<dbReference type="EnsemblMetazoa" id="FBtr0261645">
    <property type="protein sequence ID" value="FBpp0260137"/>
    <property type="gene ID" value="FBgn0232716"/>
</dbReference>
<dbReference type="EnsemblMetazoa" id="XM_002087217.4">
    <property type="protein sequence ID" value="XP_002087253.2"/>
    <property type="gene ID" value="LOC6540447"/>
</dbReference>
<dbReference type="EnsemblMetazoa" id="XM_002087308.4">
    <property type="protein sequence ID" value="XP_002087344.1"/>
    <property type="gene ID" value="LOC6540554"/>
</dbReference>
<dbReference type="EnsemblMetazoa" id="XM_002087313.4">
    <property type="protein sequence ID" value="XP_002087349.3"/>
    <property type="gene ID" value="LOC6540563"/>
</dbReference>
<dbReference type="EnsemblMetazoa" id="XM_039373181.2">
    <property type="protein sequence ID" value="XP_039229115.1"/>
    <property type="gene ID" value="LOC120321197"/>
</dbReference>
<dbReference type="EnsemblMetazoa" id="XM_039373400.2">
    <property type="protein sequence ID" value="XP_039229334.1"/>
    <property type="gene ID" value="LOC120321238"/>
</dbReference>
<dbReference type="EnsemblMetazoa" id="XM_039373401.2">
    <property type="protein sequence ID" value="XP_039229335.1"/>
    <property type="gene ID" value="LOC120321239"/>
</dbReference>
<dbReference type="EnsemblMetazoa" id="XM_039373402.2">
    <property type="protein sequence ID" value="XP_039229336.1"/>
    <property type="gene ID" value="LOC120321240"/>
</dbReference>
<dbReference type="EnsemblMetazoa" id="XM_039377243.2">
    <property type="protein sequence ID" value="XP_039233177.1"/>
    <property type="gene ID" value="LOC120322187"/>
</dbReference>
<dbReference type="EnsemblMetazoa" id="XM_039377244.2">
    <property type="protein sequence ID" value="XP_039233178.1"/>
    <property type="gene ID" value="LOC120322188"/>
</dbReference>
<dbReference type="EnsemblMetazoa" id="XM_039377245.2">
    <property type="protein sequence ID" value="XP_039233179.1"/>
    <property type="gene ID" value="LOC6540215"/>
</dbReference>
<dbReference type="EnsemblMetazoa" id="XM_039377246.2">
    <property type="protein sequence ID" value="XP_039233180.1"/>
    <property type="gene ID" value="LOC120322189"/>
</dbReference>
<dbReference type="EnsemblMetazoa" id="XM_039377247.2">
    <property type="protein sequence ID" value="XP_039233181.1"/>
    <property type="gene ID" value="LOC120322190"/>
</dbReference>
<dbReference type="EnsemblMetazoa" id="XM_039377248.2">
    <property type="protein sequence ID" value="XP_039233182.1"/>
    <property type="gene ID" value="LOC120322191"/>
</dbReference>
<dbReference type="EnsemblMetazoa" id="XM_039377249.2">
    <property type="protein sequence ID" value="XP_039233183.1"/>
    <property type="gene ID" value="LOC120322192"/>
</dbReference>
<dbReference type="EnsemblMetazoa" id="XM_039377250.2">
    <property type="protein sequence ID" value="XP_039233184.1"/>
    <property type="gene ID" value="LOC120322193"/>
</dbReference>
<dbReference type="EnsemblMetazoa" id="XM_039377251.2">
    <property type="protein sequence ID" value="XP_039233185.1"/>
    <property type="gene ID" value="LOC120322194"/>
</dbReference>
<dbReference type="EnsemblMetazoa" id="XM_039377252.2">
    <property type="protein sequence ID" value="XP_039233186.1"/>
    <property type="gene ID" value="LOC120322195"/>
</dbReference>
<dbReference type="EnsemblMetazoa" id="XM_039377253.2">
    <property type="protein sequence ID" value="XP_039233187.1"/>
    <property type="gene ID" value="LOC120322196"/>
</dbReference>
<dbReference type="EnsemblMetazoa" id="XM_039377254.2">
    <property type="protein sequence ID" value="XP_039233188.1"/>
    <property type="gene ID" value="LOC120322197"/>
</dbReference>
<dbReference type="EnsemblMetazoa" id="XM_039377255.2">
    <property type="protein sequence ID" value="XP_039233189.1"/>
    <property type="gene ID" value="LOC120322198"/>
</dbReference>
<dbReference type="GeneID" id="6540554"/>
<dbReference type="KEGG" id="dya:Dyak_GE14578"/>
<dbReference type="KEGG" id="dya:Dyak_GE15127"/>
<dbReference type="eggNOG" id="KOG1756">
    <property type="taxonomic scope" value="Eukaryota"/>
</dbReference>
<dbReference type="HOGENOM" id="CLU_062828_3_3_1"/>
<dbReference type="OMA" id="NYCERIG"/>
<dbReference type="OrthoDB" id="7839361at2759"/>
<dbReference type="PhylomeDB" id="P84055"/>
<dbReference type="ChiTaRS" id="His2Av">
    <property type="organism name" value="fly"/>
</dbReference>
<dbReference type="Proteomes" id="UP000002282">
    <property type="component" value="Unassembled WGS sequence"/>
</dbReference>
<dbReference type="GO" id="GO:0000786">
    <property type="term" value="C:nucleosome"/>
    <property type="evidence" value="ECO:0007669"/>
    <property type="project" value="UniProtKB-KW"/>
</dbReference>
<dbReference type="GO" id="GO:0005634">
    <property type="term" value="C:nucleus"/>
    <property type="evidence" value="ECO:0007669"/>
    <property type="project" value="UniProtKB-SubCell"/>
</dbReference>
<dbReference type="GO" id="GO:0005704">
    <property type="term" value="C:polytene chromosome band"/>
    <property type="evidence" value="ECO:0007669"/>
    <property type="project" value="EnsemblMetazoa"/>
</dbReference>
<dbReference type="GO" id="GO:0003677">
    <property type="term" value="F:DNA binding"/>
    <property type="evidence" value="ECO:0007669"/>
    <property type="project" value="UniProtKB-KW"/>
</dbReference>
<dbReference type="GO" id="GO:0046982">
    <property type="term" value="F:protein heterodimerization activity"/>
    <property type="evidence" value="ECO:0007669"/>
    <property type="project" value="InterPro"/>
</dbReference>
<dbReference type="GO" id="GO:0030527">
    <property type="term" value="F:structural constituent of chromatin"/>
    <property type="evidence" value="ECO:0007669"/>
    <property type="project" value="InterPro"/>
</dbReference>
<dbReference type="GO" id="GO:0007526">
    <property type="term" value="P:larval somatic muscle development"/>
    <property type="evidence" value="ECO:0007669"/>
    <property type="project" value="EnsemblMetazoa"/>
</dbReference>
<dbReference type="CDD" id="cd00074">
    <property type="entry name" value="HFD_H2A"/>
    <property type="match status" value="1"/>
</dbReference>
<dbReference type="FunFam" id="1.10.20.10:FF:000173">
    <property type="entry name" value="Histone H2A"/>
    <property type="match status" value="1"/>
</dbReference>
<dbReference type="Gene3D" id="1.10.20.10">
    <property type="entry name" value="Histone, subunit A"/>
    <property type="match status" value="1"/>
</dbReference>
<dbReference type="InterPro" id="IPR009072">
    <property type="entry name" value="Histone-fold"/>
</dbReference>
<dbReference type="InterPro" id="IPR002119">
    <property type="entry name" value="Histone_H2A"/>
</dbReference>
<dbReference type="InterPro" id="IPR007125">
    <property type="entry name" value="Histone_H2A/H2B/H3"/>
</dbReference>
<dbReference type="InterPro" id="IPR032454">
    <property type="entry name" value="Histone_H2A_C"/>
</dbReference>
<dbReference type="InterPro" id="IPR032458">
    <property type="entry name" value="Histone_H2A_CS"/>
</dbReference>
<dbReference type="PANTHER" id="PTHR23430">
    <property type="entry name" value="HISTONE H2A"/>
    <property type="match status" value="1"/>
</dbReference>
<dbReference type="Pfam" id="PF00125">
    <property type="entry name" value="Histone"/>
    <property type="match status" value="1"/>
</dbReference>
<dbReference type="Pfam" id="PF16211">
    <property type="entry name" value="Histone_H2A_C"/>
    <property type="match status" value="1"/>
</dbReference>
<dbReference type="PRINTS" id="PR00620">
    <property type="entry name" value="HISTONEH2A"/>
</dbReference>
<dbReference type="SMART" id="SM00414">
    <property type="entry name" value="H2A"/>
    <property type="match status" value="1"/>
</dbReference>
<dbReference type="SUPFAM" id="SSF47113">
    <property type="entry name" value="Histone-fold"/>
    <property type="match status" value="1"/>
</dbReference>
<dbReference type="PROSITE" id="PS00046">
    <property type="entry name" value="HISTONE_H2A"/>
    <property type="match status" value="1"/>
</dbReference>
<reference key="1">
    <citation type="journal article" date="2001" name="Genes Genet. Syst.">
        <title>Molecular evolutionary analysis of a histone gene repeating unit from Drosophila simulans.</title>
        <authorList>
            <person name="Tsunemoto K."/>
            <person name="Matsuo Y."/>
        </authorList>
    </citation>
    <scope>NUCLEOTIDE SEQUENCE [GENOMIC DNA] (HIS2A)</scope>
    <source>
        <strain>y6</strain>
    </source>
</reference>
<reference key="2">
    <citation type="journal article" date="2003" name="Genes Genet. Syst.">
        <title>Divergence and heterogeneity of the histone gene repeating units in the Drosophila melanogaster species subgroup.</title>
        <authorList>
            <person name="Kakita M."/>
            <person name="Shimizu T."/>
            <person name="Emoto M."/>
            <person name="Nagai M."/>
            <person name="Takeguchi M."/>
            <person name="Hosono Y."/>
            <person name="Kume N."/>
            <person name="Ozawa T."/>
            <person name="Ueda M."/>
            <person name="Bhuiyan M.S."/>
            <person name="Matsuo Y."/>
        </authorList>
    </citation>
    <scope>NUCLEOTIDE SEQUENCE [GENOMIC DNA] (HIS2A)</scope>
</reference>
<reference key="3">
    <citation type="journal article" date="2007" name="Nature">
        <title>Evolution of genes and genomes on the Drosophila phylogeny.</title>
        <authorList>
            <consortium name="Drosophila 12 genomes consortium"/>
        </authorList>
    </citation>
    <scope>NUCLEOTIDE SEQUENCE [LARGE SCALE GENOMIC DNA] (GE14578 AND GE15127)</scope>
    <source>
        <strain>Tai18E2 / Tucson 14021-0261.01</strain>
    </source>
</reference>
<reference key="4">
    <citation type="journal article" date="2003" name="Genome Res.">
        <title>An evolutionary analysis of orphan genes in Drosophila.</title>
        <authorList>
            <person name="Domazet-Loso T."/>
            <person name="Tautz D."/>
        </authorList>
    </citation>
    <scope>NUCLEOTIDE SEQUENCE [MRNA] OF 1-63 (HIS2A)</scope>
</reference>
<proteinExistence type="evidence at transcript level"/>
<sequence length="124" mass="13363">MSGRGKGGKVKGKAKSRSNRAGLQFPVGRIHRLLRKGNYAERVGAGAPVYLAAVMEYLAAEVLELAGNAARDNKKTRIIPRHLQLAIRNDEELNKLLSGVTIAQGGVLPNIQAVLLPKKTEKKA</sequence>